<sequence>MEETLATPDATRRSLSPSCSATVKSRAAGFERRTKRRLSETNASVREDREEAEEEEDEVKEKIEALQRIIPGGAALGVDALFEETAGYILSLQCQIKTIKVLTSFLQRIDQEDMKFGG</sequence>
<gene>
    <name type="primary">PAR1</name>
    <name type="synonym">BHLH165</name>
    <name type="synonym">HLH1</name>
    <name type="ordered locus">At2g42870</name>
    <name type="ORF">F7D19.13</name>
</gene>
<organism>
    <name type="scientific">Arabidopsis thaliana</name>
    <name type="common">Mouse-ear cress</name>
    <dbReference type="NCBI Taxonomy" id="3702"/>
    <lineage>
        <taxon>Eukaryota</taxon>
        <taxon>Viridiplantae</taxon>
        <taxon>Streptophyta</taxon>
        <taxon>Embryophyta</taxon>
        <taxon>Tracheophyta</taxon>
        <taxon>Spermatophyta</taxon>
        <taxon>Magnoliopsida</taxon>
        <taxon>eudicotyledons</taxon>
        <taxon>Gunneridae</taxon>
        <taxon>Pentapetalae</taxon>
        <taxon>rosids</taxon>
        <taxon>malvids</taxon>
        <taxon>Brassicales</taxon>
        <taxon>Brassicaceae</taxon>
        <taxon>Camelineae</taxon>
        <taxon>Arabidopsis</taxon>
    </lineage>
</organism>
<protein>
    <recommendedName>
        <fullName>Transcription factor PAR1</fullName>
    </recommendedName>
    <alternativeName>
        <fullName>Basic helix-loop-helix protein 165</fullName>
        <shortName>AtbHLH165</shortName>
        <shortName>bHLH 165</shortName>
    </alternativeName>
    <alternativeName>
        <fullName>Protein HELIX-LOOP-HELIX 1</fullName>
    </alternativeName>
    <alternativeName>
        <fullName>Protein PHYTOCHROME RAPIDLY REGULATED 1</fullName>
    </alternativeName>
    <alternativeName>
        <fullName>bHLH transcription factor bHLH165</fullName>
    </alternativeName>
</protein>
<dbReference type="EMBL" id="BN000864">
    <property type="protein sequence ID" value="CAJ55345.1"/>
    <property type="molecule type" value="mRNA"/>
</dbReference>
<dbReference type="EMBL" id="AC006931">
    <property type="protein sequence ID" value="AAD21722.1"/>
    <property type="molecule type" value="Genomic_DNA"/>
</dbReference>
<dbReference type="EMBL" id="CP002685">
    <property type="protein sequence ID" value="AEC10179.1"/>
    <property type="molecule type" value="Genomic_DNA"/>
</dbReference>
<dbReference type="EMBL" id="AK118184">
    <property type="protein sequence ID" value="BAC42807.1"/>
    <property type="molecule type" value="mRNA"/>
</dbReference>
<dbReference type="EMBL" id="BT004925">
    <property type="protein sequence ID" value="AAO50458.1"/>
    <property type="molecule type" value="mRNA"/>
</dbReference>
<dbReference type="EMBL" id="AY084291">
    <property type="protein sequence ID" value="AAM60882.1"/>
    <property type="molecule type" value="mRNA"/>
</dbReference>
<dbReference type="PIR" id="C84859">
    <property type="entry name" value="C84859"/>
</dbReference>
<dbReference type="RefSeq" id="NP_565988.1">
    <property type="nucleotide sequence ID" value="NM_129848.3"/>
</dbReference>
<dbReference type="SMR" id="Q9SJH0"/>
<dbReference type="BioGRID" id="4224">
    <property type="interactions" value="18"/>
</dbReference>
<dbReference type="FunCoup" id="Q9SJH0">
    <property type="interactions" value="2"/>
</dbReference>
<dbReference type="IntAct" id="Q9SJH0">
    <property type="interactions" value="14"/>
</dbReference>
<dbReference type="STRING" id="3702.Q9SJH0"/>
<dbReference type="iPTMnet" id="Q9SJH0"/>
<dbReference type="PaxDb" id="3702-AT2G42870.1"/>
<dbReference type="EnsemblPlants" id="AT2G42870.1">
    <property type="protein sequence ID" value="AT2G42870.1"/>
    <property type="gene ID" value="AT2G42870"/>
</dbReference>
<dbReference type="GeneID" id="818887"/>
<dbReference type="Gramene" id="AT2G42870.1">
    <property type="protein sequence ID" value="AT2G42870.1"/>
    <property type="gene ID" value="AT2G42870"/>
</dbReference>
<dbReference type="KEGG" id="ath:AT2G42870"/>
<dbReference type="Araport" id="AT2G42870"/>
<dbReference type="TAIR" id="AT2G42870">
    <property type="gene designation" value="PAR1"/>
</dbReference>
<dbReference type="eggNOG" id="ENOG502S830">
    <property type="taxonomic scope" value="Eukaryota"/>
</dbReference>
<dbReference type="HOGENOM" id="CLU_111355_1_0_1"/>
<dbReference type="InParanoid" id="Q9SJH0"/>
<dbReference type="OMA" id="NLDKQDM"/>
<dbReference type="OrthoDB" id="1363133at2759"/>
<dbReference type="PhylomeDB" id="Q9SJH0"/>
<dbReference type="PRO" id="PR:Q9SJH0"/>
<dbReference type="Proteomes" id="UP000006548">
    <property type="component" value="Chromosome 2"/>
</dbReference>
<dbReference type="ExpressionAtlas" id="Q9SJH0">
    <property type="expression patterns" value="baseline and differential"/>
</dbReference>
<dbReference type="GO" id="GO:0005634">
    <property type="term" value="C:nucleus"/>
    <property type="evidence" value="ECO:0000314"/>
    <property type="project" value="TAIR"/>
</dbReference>
<dbReference type="GO" id="GO:0042803">
    <property type="term" value="F:protein homodimerization activity"/>
    <property type="evidence" value="ECO:0000353"/>
    <property type="project" value="UniProtKB"/>
</dbReference>
<dbReference type="GO" id="GO:0003712">
    <property type="term" value="F:transcription coregulator activity"/>
    <property type="evidence" value="ECO:0000315"/>
    <property type="project" value="TAIR"/>
</dbReference>
<dbReference type="GO" id="GO:0009742">
    <property type="term" value="P:brassinosteroid mediated signaling pathway"/>
    <property type="evidence" value="ECO:0007669"/>
    <property type="project" value="UniProtKB-KW"/>
</dbReference>
<dbReference type="GO" id="GO:0032502">
    <property type="term" value="P:developmental process"/>
    <property type="evidence" value="ECO:0000315"/>
    <property type="project" value="TAIR"/>
</dbReference>
<dbReference type="GO" id="GO:0045892">
    <property type="term" value="P:negative regulation of DNA-templated transcription"/>
    <property type="evidence" value="ECO:0000315"/>
    <property type="project" value="TAIR"/>
</dbReference>
<dbReference type="GO" id="GO:0009641">
    <property type="term" value="P:shade avoidance"/>
    <property type="evidence" value="ECO:0000315"/>
    <property type="project" value="TAIR"/>
</dbReference>
<dbReference type="CDD" id="cd11444">
    <property type="entry name" value="bHLH_AtIBH1_like"/>
    <property type="match status" value="1"/>
</dbReference>
<dbReference type="InterPro" id="IPR044549">
    <property type="entry name" value="bHLH_AtIBH1-like"/>
</dbReference>
<dbReference type="InterPro" id="IPR044660">
    <property type="entry name" value="IBH1-like"/>
</dbReference>
<dbReference type="PANTHER" id="PTHR33124">
    <property type="entry name" value="TRANSCRIPTION FACTOR IBH1-LIKE 1"/>
    <property type="match status" value="1"/>
</dbReference>
<dbReference type="PANTHER" id="PTHR33124:SF68">
    <property type="entry name" value="TRANSCRIPTION FACTOR PAR1"/>
    <property type="match status" value="1"/>
</dbReference>
<accession>Q9SJH0</accession>
<evidence type="ECO:0000255" key="1">
    <source>
        <dbReference type="PROSITE-ProRule" id="PRU00981"/>
    </source>
</evidence>
<evidence type="ECO:0000256" key="2">
    <source>
        <dbReference type="SAM" id="MobiDB-lite"/>
    </source>
</evidence>
<evidence type="ECO:0000269" key="3">
    <source>
    </source>
</evidence>
<evidence type="ECO:0000269" key="4">
    <source>
    </source>
</evidence>
<evidence type="ECO:0000305" key="5"/>
<evidence type="ECO:0000305" key="6">
    <source>
    </source>
</evidence>
<name>PAR1_ARATH</name>
<keyword id="KW-1070">Brassinosteroid signaling pathway</keyword>
<keyword id="KW-0341">Growth regulation</keyword>
<keyword id="KW-0539">Nucleus</keyword>
<keyword id="KW-1185">Reference proteome</keyword>
<keyword id="KW-0678">Repressor</keyword>
<keyword id="KW-0804">Transcription</keyword>
<keyword id="KW-0805">Transcription regulation</keyword>
<feature type="chain" id="PRO_0000429106" description="Transcription factor PAR1">
    <location>
        <begin position="1"/>
        <end position="118"/>
    </location>
</feature>
<feature type="domain" description="bHLH" evidence="1">
    <location>
        <begin position="43"/>
        <end position="92"/>
    </location>
</feature>
<feature type="region of interest" description="Disordered" evidence="2">
    <location>
        <begin position="1"/>
        <end position="58"/>
    </location>
</feature>
<feature type="compositionally biased region" description="Polar residues" evidence="2">
    <location>
        <begin position="13"/>
        <end position="23"/>
    </location>
</feature>
<feature type="mutagenesis site" description="Loss of function and homodimerization." evidence="4">
    <original>L</original>
    <variation>E</variation>
    <location>
        <position position="66"/>
    </location>
</feature>
<proteinExistence type="evidence at protein level"/>
<comment type="function">
    <text evidence="3 4">Atypical bHLH transcription factor that acts as a negative regulator of a variety of shade avoidance syndrome (SAS) responses, including seedling elongation and photosynthetic pigment accumulation. Acts as a direct transcriptional repressor of two auxin-responsive genes, SAUR15 and SAUR68. May function in integrating shade and hormone transcriptional networks in response to light and auxin changes.</text>
</comment>
<comment type="subunit">
    <text evidence="4">Homodimer.</text>
</comment>
<comment type="subcellular location">
    <subcellularLocation>
        <location evidence="1 3 4">Nucleus</location>
    </subcellularLocation>
</comment>
<comment type="miscellaneous">
    <text evidence="6">Plants overexpressing PAR1 are dwarf with compact rosettes and inflorescences, epinastic leaves, shorter flowering stems and siliques and a general dark-green phenotype. Plants silencing PAR1 exhibit a slight increase in the length of hypocotyls, cotyledons and primary leaves (PubMed:17948056).</text>
</comment>
<comment type="similarity">
    <text evidence="5">Belongs to the bHLH protein family.</text>
</comment>
<reference key="1">
    <citation type="journal article" date="2005" name="Genes Dev.">
        <title>A dynamic balance between gene activation and repression regulates the shade avoidance response in Arabidopsis.</title>
        <authorList>
            <person name="Sessa G."/>
            <person name="Carabelli M."/>
            <person name="Sassi M."/>
            <person name="Ciolfi A."/>
            <person name="Possenti M."/>
            <person name="Mittempergher F."/>
            <person name="Becker J."/>
            <person name="Morelli G."/>
            <person name="Ruberti I."/>
        </authorList>
    </citation>
    <scope>NUCLEOTIDE SEQUENCE [MRNA]</scope>
    <source>
        <tissue>Seedling</tissue>
    </source>
</reference>
<reference key="2">
    <citation type="journal article" date="1999" name="Nature">
        <title>Sequence and analysis of chromosome 2 of the plant Arabidopsis thaliana.</title>
        <authorList>
            <person name="Lin X."/>
            <person name="Kaul S."/>
            <person name="Rounsley S.D."/>
            <person name="Shea T.P."/>
            <person name="Benito M.-I."/>
            <person name="Town C.D."/>
            <person name="Fujii C.Y."/>
            <person name="Mason T.M."/>
            <person name="Bowman C.L."/>
            <person name="Barnstead M.E."/>
            <person name="Feldblyum T.V."/>
            <person name="Buell C.R."/>
            <person name="Ketchum K.A."/>
            <person name="Lee J.J."/>
            <person name="Ronning C.M."/>
            <person name="Koo H.L."/>
            <person name="Moffat K.S."/>
            <person name="Cronin L.A."/>
            <person name="Shen M."/>
            <person name="Pai G."/>
            <person name="Van Aken S."/>
            <person name="Umayam L."/>
            <person name="Tallon L.J."/>
            <person name="Gill J.E."/>
            <person name="Adams M.D."/>
            <person name="Carrera A.J."/>
            <person name="Creasy T.H."/>
            <person name="Goodman H.M."/>
            <person name="Somerville C.R."/>
            <person name="Copenhaver G.P."/>
            <person name="Preuss D."/>
            <person name="Nierman W.C."/>
            <person name="White O."/>
            <person name="Eisen J.A."/>
            <person name="Salzberg S.L."/>
            <person name="Fraser C.M."/>
            <person name="Venter J.C."/>
        </authorList>
    </citation>
    <scope>NUCLEOTIDE SEQUENCE [LARGE SCALE GENOMIC DNA]</scope>
    <source>
        <strain>cv. Columbia</strain>
    </source>
</reference>
<reference key="3">
    <citation type="journal article" date="2017" name="Plant J.">
        <title>Araport11: a complete reannotation of the Arabidopsis thaliana reference genome.</title>
        <authorList>
            <person name="Cheng C.Y."/>
            <person name="Krishnakumar V."/>
            <person name="Chan A.P."/>
            <person name="Thibaud-Nissen F."/>
            <person name="Schobel S."/>
            <person name="Town C.D."/>
        </authorList>
    </citation>
    <scope>GENOME REANNOTATION</scope>
    <source>
        <strain>cv. Columbia</strain>
    </source>
</reference>
<reference key="4">
    <citation type="journal article" date="2002" name="Science">
        <title>Functional annotation of a full-length Arabidopsis cDNA collection.</title>
        <authorList>
            <person name="Seki M."/>
            <person name="Narusaka M."/>
            <person name="Kamiya A."/>
            <person name="Ishida J."/>
            <person name="Satou M."/>
            <person name="Sakurai T."/>
            <person name="Nakajima M."/>
            <person name="Enju A."/>
            <person name="Akiyama K."/>
            <person name="Oono Y."/>
            <person name="Muramatsu M."/>
            <person name="Hayashizaki Y."/>
            <person name="Kawai J."/>
            <person name="Carninci P."/>
            <person name="Itoh M."/>
            <person name="Ishii Y."/>
            <person name="Arakawa T."/>
            <person name="Shibata K."/>
            <person name="Shinagawa A."/>
            <person name="Shinozaki K."/>
        </authorList>
    </citation>
    <scope>NUCLEOTIDE SEQUENCE [LARGE SCALE MRNA]</scope>
    <source>
        <strain>cv. Columbia</strain>
    </source>
</reference>
<reference key="5">
    <citation type="journal article" date="2003" name="Science">
        <title>Empirical analysis of transcriptional activity in the Arabidopsis genome.</title>
        <authorList>
            <person name="Yamada K."/>
            <person name="Lim J."/>
            <person name="Dale J.M."/>
            <person name="Chen H."/>
            <person name="Shinn P."/>
            <person name="Palm C.J."/>
            <person name="Southwick A.M."/>
            <person name="Wu H.C."/>
            <person name="Kim C.J."/>
            <person name="Nguyen M."/>
            <person name="Pham P.K."/>
            <person name="Cheuk R.F."/>
            <person name="Karlin-Newmann G."/>
            <person name="Liu S.X."/>
            <person name="Lam B."/>
            <person name="Sakano H."/>
            <person name="Wu T."/>
            <person name="Yu G."/>
            <person name="Miranda M."/>
            <person name="Quach H.L."/>
            <person name="Tripp M."/>
            <person name="Chang C.H."/>
            <person name="Lee J.M."/>
            <person name="Toriumi M.J."/>
            <person name="Chan M.M."/>
            <person name="Tang C.C."/>
            <person name="Onodera C.S."/>
            <person name="Deng J.M."/>
            <person name="Akiyama K."/>
            <person name="Ansari Y."/>
            <person name="Arakawa T."/>
            <person name="Banh J."/>
            <person name="Banno F."/>
            <person name="Bowser L."/>
            <person name="Brooks S.Y."/>
            <person name="Carninci P."/>
            <person name="Chao Q."/>
            <person name="Choy N."/>
            <person name="Enju A."/>
            <person name="Goldsmith A.D."/>
            <person name="Gurjal M."/>
            <person name="Hansen N.F."/>
            <person name="Hayashizaki Y."/>
            <person name="Johnson-Hopson C."/>
            <person name="Hsuan V.W."/>
            <person name="Iida K."/>
            <person name="Karnes M."/>
            <person name="Khan S."/>
            <person name="Koesema E."/>
            <person name="Ishida J."/>
            <person name="Jiang P.X."/>
            <person name="Jones T."/>
            <person name="Kawai J."/>
            <person name="Kamiya A."/>
            <person name="Meyers C."/>
            <person name="Nakajima M."/>
            <person name="Narusaka M."/>
            <person name="Seki M."/>
            <person name="Sakurai T."/>
            <person name="Satou M."/>
            <person name="Tamse R."/>
            <person name="Vaysberg M."/>
            <person name="Wallender E.K."/>
            <person name="Wong C."/>
            <person name="Yamamura Y."/>
            <person name="Yuan S."/>
            <person name="Shinozaki K."/>
            <person name="Davis R.W."/>
            <person name="Theologis A."/>
            <person name="Ecker J.R."/>
        </authorList>
    </citation>
    <scope>NUCLEOTIDE SEQUENCE [LARGE SCALE MRNA]</scope>
    <source>
        <strain>cv. Columbia</strain>
    </source>
</reference>
<reference key="6">
    <citation type="submission" date="2002-03" db="EMBL/GenBank/DDBJ databases">
        <title>Full-length cDNA from Arabidopsis thaliana.</title>
        <authorList>
            <person name="Brover V.V."/>
            <person name="Troukhan M.E."/>
            <person name="Alexandrov N.A."/>
            <person name="Lu Y.-P."/>
            <person name="Flavell R.B."/>
            <person name="Feldmann K.A."/>
        </authorList>
    </citation>
    <scope>NUCLEOTIDE SEQUENCE [LARGE SCALE MRNA]</scope>
</reference>
<reference key="7">
    <citation type="journal article" date="2007" name="EMBO J.">
        <title>Interaction of shade avoidance and auxin responses: a role for two novel atypical bHLH proteins.</title>
        <authorList>
            <person name="Roig-Villanova I."/>
            <person name="Bou-Torrent J."/>
            <person name="Galstyan A."/>
            <person name="Carretero-Paulet L."/>
            <person name="Portoles S."/>
            <person name="Rodriguez-Concepcion M."/>
            <person name="Martinez-Garcia J.F."/>
        </authorList>
    </citation>
    <scope>FUNCTION</scope>
    <scope>SUBCELLULAR LOCATION</scope>
</reference>
<reference key="8">
    <citation type="journal article" date="2011" name="Plant J.">
        <title>The shade avoidance syndrome in Arabidopsis: a fundamental role for atypical basic helix-loop-helix proteins as transcriptional cofactors.</title>
        <authorList>
            <person name="Galstyan A."/>
            <person name="Cifuentes-Esquivel N."/>
            <person name="Bou-Torrent J."/>
            <person name="Martinez-Garcia J.F."/>
        </authorList>
    </citation>
    <scope>FUNCTION</scope>
    <scope>SUBUNIT</scope>
    <scope>SUBCELLULAR LOCATION</scope>
    <scope>MUTAGENESIS OF LEU-66</scope>
</reference>